<feature type="chain" id="PRO_0000082622" description="DnaJ homolog subfamily C member 24">
    <location>
        <begin position="1"/>
        <end position="149"/>
    </location>
</feature>
<feature type="domain" description="J" evidence="2">
    <location>
        <begin position="11"/>
        <end position="82"/>
    </location>
</feature>
<feature type="domain" description="DPH-type MB" evidence="3">
    <location>
        <begin position="93"/>
        <end position="148"/>
    </location>
</feature>
<feature type="binding site" evidence="3 5">
    <location>
        <position position="115"/>
    </location>
    <ligand>
        <name>Zn(2+)</name>
        <dbReference type="ChEBI" id="CHEBI:29105"/>
    </ligand>
</feature>
<feature type="binding site" evidence="3 5 10">
    <location>
        <position position="117"/>
    </location>
    <ligand>
        <name>Zn(2+)</name>
        <dbReference type="ChEBI" id="CHEBI:29105"/>
    </ligand>
</feature>
<feature type="binding site" evidence="3 5">
    <location>
        <position position="136"/>
    </location>
    <ligand>
        <name>Zn(2+)</name>
        <dbReference type="ChEBI" id="CHEBI:29105"/>
    </ligand>
</feature>
<feature type="binding site" evidence="3 5 10">
    <location>
        <position position="139"/>
    </location>
    <ligand>
        <name>Zn(2+)</name>
        <dbReference type="ChEBI" id="CHEBI:29105"/>
    </ligand>
</feature>
<feature type="splice variant" id="VSP_056274" description="In isoform 2." evidence="7">
    <original>EDDLRNVGPVDAQVYLEEMSWNEGDHSFYLSCRCGGKYSVSKDEAEEVSLISCDTCSLIIELLHYN</original>
    <variation>GS</variation>
    <location>
        <begin position="84"/>
        <end position="149"/>
    </location>
</feature>
<feature type="sequence variant" id="VAR_036397" description="In a breast cancer sample; somatic mutation; dbSNP:rs111299050." evidence="4">
    <original>N</original>
    <variation>D</variation>
    <location>
        <position position="23"/>
    </location>
</feature>
<feature type="mutagenesis site" description="Loss of iron-binding." evidence="5">
    <original>C</original>
    <variation>S</variation>
    <location>
        <position position="139"/>
    </location>
</feature>
<feature type="helix" evidence="11">
    <location>
        <begin position="11"/>
        <end position="16"/>
    </location>
</feature>
<feature type="helix" evidence="11">
    <location>
        <begin position="24"/>
        <end position="38"/>
    </location>
</feature>
<feature type="helix" evidence="11">
    <location>
        <begin position="50"/>
        <end position="68"/>
    </location>
</feature>
<feature type="strand" evidence="11">
    <location>
        <begin position="69"/>
        <end position="71"/>
    </location>
</feature>
<feature type="turn" evidence="11">
    <location>
        <begin position="72"/>
        <end position="75"/>
    </location>
</feature>
<feature type="helix" evidence="11">
    <location>
        <begin position="77"/>
        <end position="88"/>
    </location>
</feature>
<feature type="strand" evidence="11">
    <location>
        <begin position="92"/>
        <end position="98"/>
    </location>
</feature>
<feature type="turn" evidence="11">
    <location>
        <begin position="99"/>
        <end position="101"/>
    </location>
</feature>
<feature type="strand" evidence="11">
    <location>
        <begin position="102"/>
        <end position="105"/>
    </location>
</feature>
<feature type="turn" evidence="11">
    <location>
        <begin position="106"/>
        <end position="109"/>
    </location>
</feature>
<feature type="strand" evidence="11">
    <location>
        <begin position="110"/>
        <end position="114"/>
    </location>
</feature>
<feature type="strand" evidence="11">
    <location>
        <begin position="116"/>
        <end position="118"/>
    </location>
</feature>
<feature type="strand" evidence="11">
    <location>
        <begin position="120"/>
        <end position="124"/>
    </location>
</feature>
<feature type="helix" evidence="11">
    <location>
        <begin position="127"/>
        <end position="130"/>
    </location>
</feature>
<feature type="strand" evidence="11">
    <location>
        <begin position="133"/>
        <end position="135"/>
    </location>
</feature>
<feature type="strand" evidence="11">
    <location>
        <begin position="137"/>
        <end position="140"/>
    </location>
</feature>
<feature type="strand" evidence="11">
    <location>
        <begin position="142"/>
        <end position="146"/>
    </location>
</feature>
<gene>
    <name evidence="9" type="primary">DNAJC24</name>
    <name type="synonym">DPH4</name>
    <name type="synonym">ZCSL3</name>
</gene>
<protein>
    <recommendedName>
        <fullName>DnaJ homolog subfamily C member 24</fullName>
    </recommendedName>
    <alternativeName>
        <fullName>CSL-type zinc finger-containing protein 3</fullName>
    </alternativeName>
    <alternativeName>
        <fullName>Diphthamide biosynthesis protein 4</fullName>
    </alternativeName>
</protein>
<evidence type="ECO:0000250" key="1"/>
<evidence type="ECO:0000255" key="2">
    <source>
        <dbReference type="PROSITE-ProRule" id="PRU00286"/>
    </source>
</evidence>
<evidence type="ECO:0000255" key="3">
    <source>
        <dbReference type="PROSITE-ProRule" id="PRU00456"/>
    </source>
</evidence>
<evidence type="ECO:0000269" key="4">
    <source>
    </source>
</evidence>
<evidence type="ECO:0000269" key="5">
    <source>
    </source>
</evidence>
<evidence type="ECO:0000269" key="6">
    <source>
    </source>
</evidence>
<evidence type="ECO:0000303" key="7">
    <source>
    </source>
</evidence>
<evidence type="ECO:0000305" key="8"/>
<evidence type="ECO:0000312" key="9">
    <source>
        <dbReference type="HGNC" id="HGNC:26979"/>
    </source>
</evidence>
<evidence type="ECO:0007744" key="10">
    <source>
        <dbReference type="PDB" id="2L6L"/>
    </source>
</evidence>
<evidence type="ECO:0007829" key="11">
    <source>
        <dbReference type="PDB" id="2L6L"/>
    </source>
</evidence>
<proteinExistence type="evidence at protein level"/>
<keyword id="KW-0002">3D-structure</keyword>
<keyword id="KW-0025">Alternative splicing</keyword>
<keyword id="KW-0963">Cytoplasm</keyword>
<keyword id="KW-0206">Cytoskeleton</keyword>
<keyword id="KW-0903">Direct protein sequencing</keyword>
<keyword id="KW-0249">Electron transport</keyword>
<keyword id="KW-0408">Iron</keyword>
<keyword id="KW-0479">Metal-binding</keyword>
<keyword id="KW-1267">Proteomics identification</keyword>
<keyword id="KW-1185">Reference proteome</keyword>
<keyword id="KW-0813">Transport</keyword>
<keyword id="KW-0862">Zinc</keyword>
<accession>Q6P3W2</accession>
<accession>A8K0V0</accession>
<accession>B1ALC1</accession>
<accession>I6L9B4</accession>
<reference key="1">
    <citation type="journal article" date="2004" name="Nat. Genet.">
        <title>Complete sequencing and characterization of 21,243 full-length human cDNAs.</title>
        <authorList>
            <person name="Ota T."/>
            <person name="Suzuki Y."/>
            <person name="Nishikawa T."/>
            <person name="Otsuki T."/>
            <person name="Sugiyama T."/>
            <person name="Irie R."/>
            <person name="Wakamatsu A."/>
            <person name="Hayashi K."/>
            <person name="Sato H."/>
            <person name="Nagai K."/>
            <person name="Kimura K."/>
            <person name="Makita H."/>
            <person name="Sekine M."/>
            <person name="Obayashi M."/>
            <person name="Nishi T."/>
            <person name="Shibahara T."/>
            <person name="Tanaka T."/>
            <person name="Ishii S."/>
            <person name="Yamamoto J."/>
            <person name="Saito K."/>
            <person name="Kawai Y."/>
            <person name="Isono Y."/>
            <person name="Nakamura Y."/>
            <person name="Nagahari K."/>
            <person name="Murakami K."/>
            <person name="Yasuda T."/>
            <person name="Iwayanagi T."/>
            <person name="Wagatsuma M."/>
            <person name="Shiratori A."/>
            <person name="Sudo H."/>
            <person name="Hosoiri T."/>
            <person name="Kaku Y."/>
            <person name="Kodaira H."/>
            <person name="Kondo H."/>
            <person name="Sugawara M."/>
            <person name="Takahashi M."/>
            <person name="Kanda K."/>
            <person name="Yokoi T."/>
            <person name="Furuya T."/>
            <person name="Kikkawa E."/>
            <person name="Omura Y."/>
            <person name="Abe K."/>
            <person name="Kamihara K."/>
            <person name="Katsuta N."/>
            <person name="Sato K."/>
            <person name="Tanikawa M."/>
            <person name="Yamazaki M."/>
            <person name="Ninomiya K."/>
            <person name="Ishibashi T."/>
            <person name="Yamashita H."/>
            <person name="Murakawa K."/>
            <person name="Fujimori K."/>
            <person name="Tanai H."/>
            <person name="Kimata M."/>
            <person name="Watanabe M."/>
            <person name="Hiraoka S."/>
            <person name="Chiba Y."/>
            <person name="Ishida S."/>
            <person name="Ono Y."/>
            <person name="Takiguchi S."/>
            <person name="Watanabe S."/>
            <person name="Yosida M."/>
            <person name="Hotuta T."/>
            <person name="Kusano J."/>
            <person name="Kanehori K."/>
            <person name="Takahashi-Fujii A."/>
            <person name="Hara H."/>
            <person name="Tanase T.-O."/>
            <person name="Nomura Y."/>
            <person name="Togiya S."/>
            <person name="Komai F."/>
            <person name="Hara R."/>
            <person name="Takeuchi K."/>
            <person name="Arita M."/>
            <person name="Imose N."/>
            <person name="Musashino K."/>
            <person name="Yuuki H."/>
            <person name="Oshima A."/>
            <person name="Sasaki N."/>
            <person name="Aotsuka S."/>
            <person name="Yoshikawa Y."/>
            <person name="Matsunawa H."/>
            <person name="Ichihara T."/>
            <person name="Shiohata N."/>
            <person name="Sano S."/>
            <person name="Moriya S."/>
            <person name="Momiyama H."/>
            <person name="Satoh N."/>
            <person name="Takami S."/>
            <person name="Terashima Y."/>
            <person name="Suzuki O."/>
            <person name="Nakagawa S."/>
            <person name="Senoh A."/>
            <person name="Mizoguchi H."/>
            <person name="Goto Y."/>
            <person name="Shimizu F."/>
            <person name="Wakebe H."/>
            <person name="Hishigaki H."/>
            <person name="Watanabe T."/>
            <person name="Sugiyama A."/>
            <person name="Takemoto M."/>
            <person name="Kawakami B."/>
            <person name="Yamazaki M."/>
            <person name="Watanabe K."/>
            <person name="Kumagai A."/>
            <person name="Itakura S."/>
            <person name="Fukuzumi Y."/>
            <person name="Fujimori Y."/>
            <person name="Komiyama M."/>
            <person name="Tashiro H."/>
            <person name="Tanigami A."/>
            <person name="Fujiwara T."/>
            <person name="Ono T."/>
            <person name="Yamada K."/>
            <person name="Fujii Y."/>
            <person name="Ozaki K."/>
            <person name="Hirao M."/>
            <person name="Ohmori Y."/>
            <person name="Kawabata A."/>
            <person name="Hikiji T."/>
            <person name="Kobatake N."/>
            <person name="Inagaki H."/>
            <person name="Ikema Y."/>
            <person name="Okamoto S."/>
            <person name="Okitani R."/>
            <person name="Kawakami T."/>
            <person name="Noguchi S."/>
            <person name="Itoh T."/>
            <person name="Shigeta K."/>
            <person name="Senba T."/>
            <person name="Matsumura K."/>
            <person name="Nakajima Y."/>
            <person name="Mizuno T."/>
            <person name="Morinaga M."/>
            <person name="Sasaki M."/>
            <person name="Togashi T."/>
            <person name="Oyama M."/>
            <person name="Hata H."/>
            <person name="Watanabe M."/>
            <person name="Komatsu T."/>
            <person name="Mizushima-Sugano J."/>
            <person name="Satoh T."/>
            <person name="Shirai Y."/>
            <person name="Takahashi Y."/>
            <person name="Nakagawa K."/>
            <person name="Okumura K."/>
            <person name="Nagase T."/>
            <person name="Nomura N."/>
            <person name="Kikuchi H."/>
            <person name="Masuho Y."/>
            <person name="Yamashita R."/>
            <person name="Nakai K."/>
            <person name="Yada T."/>
            <person name="Nakamura Y."/>
            <person name="Ohara O."/>
            <person name="Isogai T."/>
            <person name="Sugano S."/>
        </authorList>
    </citation>
    <scope>NUCLEOTIDE SEQUENCE [LARGE SCALE MRNA] (ISOFORM 1)</scope>
    <source>
        <tissue>Amygdala</tissue>
    </source>
</reference>
<reference key="2">
    <citation type="journal article" date="2006" name="Nature">
        <title>Human chromosome 11 DNA sequence and analysis including novel gene identification.</title>
        <authorList>
            <person name="Taylor T.D."/>
            <person name="Noguchi H."/>
            <person name="Totoki Y."/>
            <person name="Toyoda A."/>
            <person name="Kuroki Y."/>
            <person name="Dewar K."/>
            <person name="Lloyd C."/>
            <person name="Itoh T."/>
            <person name="Takeda T."/>
            <person name="Kim D.-W."/>
            <person name="She X."/>
            <person name="Barlow K.F."/>
            <person name="Bloom T."/>
            <person name="Bruford E."/>
            <person name="Chang J.L."/>
            <person name="Cuomo C.A."/>
            <person name="Eichler E."/>
            <person name="FitzGerald M.G."/>
            <person name="Jaffe D.B."/>
            <person name="LaButti K."/>
            <person name="Nicol R."/>
            <person name="Park H.-S."/>
            <person name="Seaman C."/>
            <person name="Sougnez C."/>
            <person name="Yang X."/>
            <person name="Zimmer A.R."/>
            <person name="Zody M.C."/>
            <person name="Birren B.W."/>
            <person name="Nusbaum C."/>
            <person name="Fujiyama A."/>
            <person name="Hattori M."/>
            <person name="Rogers J."/>
            <person name="Lander E.S."/>
            <person name="Sakaki Y."/>
        </authorList>
    </citation>
    <scope>NUCLEOTIDE SEQUENCE [LARGE SCALE GENOMIC DNA]</scope>
</reference>
<reference key="3">
    <citation type="submission" date="2005-09" db="EMBL/GenBank/DDBJ databases">
        <authorList>
            <person name="Mural R.J."/>
            <person name="Istrail S."/>
            <person name="Sutton G.G."/>
            <person name="Florea L."/>
            <person name="Halpern A.L."/>
            <person name="Mobarry C.M."/>
            <person name="Lippert R."/>
            <person name="Walenz B."/>
            <person name="Shatkay H."/>
            <person name="Dew I."/>
            <person name="Miller J.R."/>
            <person name="Flanigan M.J."/>
            <person name="Edwards N.J."/>
            <person name="Bolanos R."/>
            <person name="Fasulo D."/>
            <person name="Halldorsson B.V."/>
            <person name="Hannenhalli S."/>
            <person name="Turner R."/>
            <person name="Yooseph S."/>
            <person name="Lu F."/>
            <person name="Nusskern D.R."/>
            <person name="Shue B.C."/>
            <person name="Zheng X.H."/>
            <person name="Zhong F."/>
            <person name="Delcher A.L."/>
            <person name="Huson D.H."/>
            <person name="Kravitz S.A."/>
            <person name="Mouchard L."/>
            <person name="Reinert K."/>
            <person name="Remington K.A."/>
            <person name="Clark A.G."/>
            <person name="Waterman M.S."/>
            <person name="Eichler E.E."/>
            <person name="Adams M.D."/>
            <person name="Hunkapiller M.W."/>
            <person name="Myers E.W."/>
            <person name="Venter J.C."/>
        </authorList>
    </citation>
    <scope>NUCLEOTIDE SEQUENCE [LARGE SCALE GENOMIC DNA]</scope>
</reference>
<reference key="4">
    <citation type="journal article" date="2004" name="Genome Res.">
        <title>The status, quality, and expansion of the NIH full-length cDNA project: the Mammalian Gene Collection (MGC).</title>
        <authorList>
            <consortium name="The MGC Project Team"/>
        </authorList>
    </citation>
    <scope>NUCLEOTIDE SEQUENCE [LARGE SCALE MRNA] (ISOFORMS 1 AND 2)</scope>
    <source>
        <tissue>Brain</tissue>
        <tissue>Uterus</tissue>
    </source>
</reference>
<reference key="5">
    <citation type="journal article" date="2012" name="Proc. Natl. Acad. Sci. U.S.A.">
        <title>Immunotoxin resistance via reversible methylation of the DPH4 promoter is a unique survival strategy.</title>
        <authorList>
            <person name="Wei H."/>
            <person name="Xiang L."/>
            <person name="Wayne A.S."/>
            <person name="Chertov O."/>
            <person name="FitzGerald D.J."/>
            <person name="Bera T.K."/>
            <person name="Pastan I."/>
        </authorList>
    </citation>
    <scope>FUNCTION IN DIPHTHAMIDE BIOSYNTHESIS</scope>
</reference>
<reference key="6">
    <citation type="journal article" date="2012" name="J. Biol. Chem.">
        <title>Structure and mechanistic insights into novel iron-mediated moonlighting functions of human J-protein cochaperone, Dph4.</title>
        <authorList>
            <person name="Thakur A."/>
            <person name="Chitoor B."/>
            <person name="Goswami A.V."/>
            <person name="Pareek G."/>
            <person name="Atreya H.S."/>
            <person name="D'Silva P."/>
        </authorList>
    </citation>
    <scope>STRUCTURE BY NMR IN COMPLEX WITH ZINC ION</scope>
    <scope>PARTIAL PROTEIN SEQUENCE</scope>
    <scope>FUNCTION AS HSP70-TYPE CO-CHAPERONE</scope>
    <scope>SUBUNIT</scope>
    <scope>IRON-BINDING</scope>
    <scope>MUTAGENESIS OF CYS-139</scope>
</reference>
<reference key="7">
    <citation type="journal article" date="2006" name="Science">
        <title>The consensus coding sequences of human breast and colorectal cancers.</title>
        <authorList>
            <person name="Sjoeblom T."/>
            <person name="Jones S."/>
            <person name="Wood L.D."/>
            <person name="Parsons D.W."/>
            <person name="Lin J."/>
            <person name="Barber T.D."/>
            <person name="Mandelker D."/>
            <person name="Leary R.J."/>
            <person name="Ptak J."/>
            <person name="Silliman N."/>
            <person name="Szabo S."/>
            <person name="Buckhaults P."/>
            <person name="Farrell C."/>
            <person name="Meeh P."/>
            <person name="Markowitz S.D."/>
            <person name="Willis J."/>
            <person name="Dawson D."/>
            <person name="Willson J.K.V."/>
            <person name="Gazdar A.F."/>
            <person name="Hartigan J."/>
            <person name="Wu L."/>
            <person name="Liu C."/>
            <person name="Parmigiani G."/>
            <person name="Park B.H."/>
            <person name="Bachman K.E."/>
            <person name="Papadopoulos N."/>
            <person name="Vogelstein B."/>
            <person name="Kinzler K.W."/>
            <person name="Velculescu V.E."/>
        </authorList>
    </citation>
    <scope>VARIANT [LARGE SCALE ANALYSIS] ASP-23</scope>
</reference>
<comment type="function">
    <text evidence="5 6">Stimulates the ATPase activity of several Hsp70-type chaperones. This ability is enhanced by iron-binding. The iron-bound form is redox-active and can function as electron carrier. Plays a role in the diphthamide biosynthesis, a post-translational modification of histidine which occurs in translation elongation factor 2 (EEF2) which can be ADP-ribosylated by diphtheria toxin and by Pseudomonas exotoxin A (Eta).</text>
</comment>
<comment type="pathway">
    <text>Protein modification; peptidyl-diphthamide biosynthesis.</text>
</comment>
<comment type="subunit">
    <text evidence="5">Monomer and homooligomer. Iron binding promotes oligomerization.</text>
</comment>
<comment type="subcellular location">
    <subcellularLocation>
        <location evidence="1">Cytoplasm</location>
        <location evidence="1">Cytoskeleton</location>
    </subcellularLocation>
</comment>
<comment type="alternative products">
    <event type="alternative splicing"/>
    <isoform>
        <id>Q6P3W2-1</id>
        <name>1</name>
        <sequence type="displayed"/>
    </isoform>
    <isoform>
        <id>Q6P3W2-2</id>
        <name>2</name>
        <sequence type="described" ref="VSP_056274"/>
    </isoform>
</comment>
<comment type="domain">
    <text evidence="3 5">The DPH-type metal-binding (MB) domain can bind either zinc or iron ions.</text>
</comment>
<comment type="similarity">
    <text evidence="8">Belongs to the DPH4 family.</text>
</comment>
<comment type="caution">
    <text evidence="8">It is uncertain whether Met-1 or Met-2 is the initiator.</text>
</comment>
<comment type="sequence caution" evidence="8">
    <conflict type="erroneous initiation">
        <sequence resource="EMBL-CDS" id="AAH36571"/>
    </conflict>
    <text>Truncated N-terminus.</text>
</comment>
<comment type="sequence caution" evidence="8">
    <conflict type="erroneous initiation">
        <sequence resource="EMBL-CDS" id="AAH63804"/>
    </conflict>
    <text>Truncated N-terminus.</text>
</comment>
<comment type="sequence caution" evidence="8">
    <conflict type="erroneous initiation">
        <sequence resource="EMBL-CDS" id="BAF82354"/>
    </conflict>
    <text>Truncated N-terminus.</text>
</comment>
<dbReference type="EMBL" id="AK289665">
    <property type="protein sequence ID" value="BAF82354.1"/>
    <property type="status" value="ALT_INIT"/>
    <property type="molecule type" value="mRNA"/>
</dbReference>
<dbReference type="EMBL" id="AC108456">
    <property type="status" value="NOT_ANNOTATED_CDS"/>
    <property type="molecule type" value="Genomic_DNA"/>
</dbReference>
<dbReference type="EMBL" id="AL137804">
    <property type="status" value="NOT_ANNOTATED_CDS"/>
    <property type="molecule type" value="Genomic_DNA"/>
</dbReference>
<dbReference type="EMBL" id="CH471064">
    <property type="protein sequence ID" value="EAW68245.1"/>
    <property type="molecule type" value="Genomic_DNA"/>
</dbReference>
<dbReference type="EMBL" id="BC036571">
    <property type="protein sequence ID" value="AAH36571.1"/>
    <property type="status" value="ALT_INIT"/>
    <property type="molecule type" value="mRNA"/>
</dbReference>
<dbReference type="EMBL" id="BC063804">
    <property type="protein sequence ID" value="AAH63804.1"/>
    <property type="status" value="ALT_INIT"/>
    <property type="molecule type" value="mRNA"/>
</dbReference>
<dbReference type="CCDS" id="CCDS7873.2">
    <molecule id="Q6P3W2-1"/>
</dbReference>
<dbReference type="RefSeq" id="NP_859057.4">
    <molecule id="Q6P3W2-1"/>
    <property type="nucleotide sequence ID" value="NM_181706.4"/>
</dbReference>
<dbReference type="PDB" id="2L6L">
    <property type="method" value="NMR"/>
    <property type="chains" value="A=2-149"/>
</dbReference>
<dbReference type="PDBsum" id="2L6L"/>
<dbReference type="BMRB" id="Q6P3W2"/>
<dbReference type="SMR" id="Q6P3W2"/>
<dbReference type="BioGRID" id="125688">
    <property type="interactions" value="10"/>
</dbReference>
<dbReference type="FunCoup" id="Q6P3W2">
    <property type="interactions" value="2028"/>
</dbReference>
<dbReference type="IntAct" id="Q6P3W2">
    <property type="interactions" value="4"/>
</dbReference>
<dbReference type="STRING" id="9606.ENSP00000417548"/>
<dbReference type="iPTMnet" id="Q6P3W2"/>
<dbReference type="PhosphoSitePlus" id="Q6P3W2"/>
<dbReference type="BioMuta" id="DNAJC24"/>
<dbReference type="DMDM" id="66773991"/>
<dbReference type="jPOST" id="Q6P3W2"/>
<dbReference type="MassIVE" id="Q6P3W2"/>
<dbReference type="PaxDb" id="9606-ENSP00000417548"/>
<dbReference type="PeptideAtlas" id="Q6P3W2"/>
<dbReference type="ProteomicsDB" id="66934">
    <molecule id="Q6P3W2-1"/>
</dbReference>
<dbReference type="Pumba" id="Q6P3W2"/>
<dbReference type="Antibodypedia" id="12795">
    <property type="antibodies" value="112 antibodies from 23 providers"/>
</dbReference>
<dbReference type="DNASU" id="120526"/>
<dbReference type="Ensembl" id="ENST00000465995.6">
    <molecule id="Q6P3W2-1"/>
    <property type="protein sequence ID" value="ENSP00000417548.1"/>
    <property type="gene ID" value="ENSG00000170946.15"/>
</dbReference>
<dbReference type="Ensembl" id="ENST00000526042.5">
    <molecule id="Q6P3W2-2"/>
    <property type="protein sequence ID" value="ENSP00000435771.1"/>
    <property type="gene ID" value="ENSG00000170946.15"/>
</dbReference>
<dbReference type="GeneID" id="120526"/>
<dbReference type="KEGG" id="hsa:120526"/>
<dbReference type="MANE-Select" id="ENST00000465995.6">
    <property type="protein sequence ID" value="ENSP00000417548.1"/>
    <property type="RefSeq nucleotide sequence ID" value="NM_181706.5"/>
    <property type="RefSeq protein sequence ID" value="NP_859057.4"/>
</dbReference>
<dbReference type="AGR" id="HGNC:26979"/>
<dbReference type="CTD" id="120526"/>
<dbReference type="DisGeNET" id="120526"/>
<dbReference type="GeneCards" id="DNAJC24"/>
<dbReference type="HGNC" id="HGNC:26979">
    <property type="gene designation" value="DNAJC24"/>
</dbReference>
<dbReference type="HPA" id="ENSG00000170946">
    <property type="expression patterns" value="Low tissue specificity"/>
</dbReference>
<dbReference type="MIM" id="611072">
    <property type="type" value="gene"/>
</dbReference>
<dbReference type="neXtProt" id="NX_Q6P3W2"/>
<dbReference type="OpenTargets" id="ENSG00000170946"/>
<dbReference type="PharmGKB" id="PA162383906"/>
<dbReference type="VEuPathDB" id="HostDB:ENSG00000170946"/>
<dbReference type="eggNOG" id="KOG0715">
    <property type="taxonomic scope" value="Eukaryota"/>
</dbReference>
<dbReference type="GeneTree" id="ENSGT00390000005430"/>
<dbReference type="InParanoid" id="Q6P3W2"/>
<dbReference type="OMA" id="LEDMTWE"/>
<dbReference type="OrthoDB" id="66964at2759"/>
<dbReference type="PAN-GO" id="Q6P3W2">
    <property type="GO annotations" value="3 GO annotations based on evolutionary models"/>
</dbReference>
<dbReference type="PhylomeDB" id="Q6P3W2"/>
<dbReference type="TreeFam" id="TF326955"/>
<dbReference type="PathwayCommons" id="Q6P3W2"/>
<dbReference type="Reactome" id="R-HSA-5358493">
    <property type="pathway name" value="Synthesis of diphthamide-EEF2"/>
</dbReference>
<dbReference type="UniPathway" id="UPA00559"/>
<dbReference type="BioGRID-ORCS" id="120526">
    <property type="hits" value="36 hits in 1130 CRISPR screens"/>
</dbReference>
<dbReference type="ChiTaRS" id="DNAJC24">
    <property type="organism name" value="human"/>
</dbReference>
<dbReference type="EvolutionaryTrace" id="Q6P3W2"/>
<dbReference type="GenomeRNAi" id="120526"/>
<dbReference type="Pharos" id="Q6P3W2">
    <property type="development level" value="Tbio"/>
</dbReference>
<dbReference type="PRO" id="PR:Q6P3W2"/>
<dbReference type="Proteomes" id="UP000005640">
    <property type="component" value="Chromosome 11"/>
</dbReference>
<dbReference type="RNAct" id="Q6P3W2">
    <property type="molecule type" value="protein"/>
</dbReference>
<dbReference type="Bgee" id="ENSG00000170946">
    <property type="expression patterns" value="Expressed in heart right ventricle and 205 other cell types or tissues"/>
</dbReference>
<dbReference type="ExpressionAtlas" id="Q6P3W2">
    <property type="expression patterns" value="baseline and differential"/>
</dbReference>
<dbReference type="GO" id="GO:0015629">
    <property type="term" value="C:actin cytoskeleton"/>
    <property type="evidence" value="ECO:0007669"/>
    <property type="project" value="Ensembl"/>
</dbReference>
<dbReference type="GO" id="GO:0005737">
    <property type="term" value="C:cytoplasm"/>
    <property type="evidence" value="ECO:0007669"/>
    <property type="project" value="UniProtKB-KW"/>
</dbReference>
<dbReference type="GO" id="GO:0001671">
    <property type="term" value="F:ATPase activator activity"/>
    <property type="evidence" value="ECO:0000314"/>
    <property type="project" value="UniProtKB"/>
</dbReference>
<dbReference type="GO" id="GO:0008198">
    <property type="term" value="F:ferrous iron binding"/>
    <property type="evidence" value="ECO:0000314"/>
    <property type="project" value="UniProtKB"/>
</dbReference>
<dbReference type="GO" id="GO:0008270">
    <property type="term" value="F:zinc ion binding"/>
    <property type="evidence" value="ECO:0000314"/>
    <property type="project" value="UniProtKB"/>
</dbReference>
<dbReference type="GO" id="GO:0061077">
    <property type="term" value="P:chaperone-mediated protein folding"/>
    <property type="evidence" value="ECO:0000304"/>
    <property type="project" value="UniProtKB"/>
</dbReference>
<dbReference type="GO" id="GO:0032781">
    <property type="term" value="P:positive regulation of ATP-dependent activity"/>
    <property type="evidence" value="ECO:0000314"/>
    <property type="project" value="UniProtKB"/>
</dbReference>
<dbReference type="GO" id="GO:0017183">
    <property type="term" value="P:protein histidyl modification to diphthamide"/>
    <property type="evidence" value="ECO:0007669"/>
    <property type="project" value="UniProtKB-UniPathway"/>
</dbReference>
<dbReference type="CDD" id="cd06257">
    <property type="entry name" value="DnaJ"/>
    <property type="match status" value="1"/>
</dbReference>
<dbReference type="DisProt" id="DP00865"/>
<dbReference type="FunFam" id="1.10.287.110:FF:000056">
    <property type="entry name" value="DnaJ (Hsp40) homolog, subfamily C, member 24"/>
    <property type="match status" value="1"/>
</dbReference>
<dbReference type="FunFam" id="3.10.660.10:FF:000002">
    <property type="entry name" value="DnaJ (Hsp40) homolog, subfamily C, member 24"/>
    <property type="match status" value="1"/>
</dbReference>
<dbReference type="Gene3D" id="1.10.287.110">
    <property type="entry name" value="DnaJ domain"/>
    <property type="match status" value="1"/>
</dbReference>
<dbReference type="Gene3D" id="3.10.660.10">
    <property type="entry name" value="DPH Zinc finger"/>
    <property type="match status" value="1"/>
</dbReference>
<dbReference type="InterPro" id="IPR001623">
    <property type="entry name" value="DnaJ_domain"/>
</dbReference>
<dbReference type="InterPro" id="IPR007872">
    <property type="entry name" value="DPH_MB_dom"/>
</dbReference>
<dbReference type="InterPro" id="IPR036671">
    <property type="entry name" value="DPH_MB_sf"/>
</dbReference>
<dbReference type="InterPro" id="IPR036869">
    <property type="entry name" value="J_dom_sf"/>
</dbReference>
<dbReference type="PANTHER" id="PTHR45255">
    <property type="entry name" value="DNAJ HOMOLOG SUBFAMILY C MEMBER 24"/>
    <property type="match status" value="1"/>
</dbReference>
<dbReference type="PANTHER" id="PTHR45255:SF1">
    <property type="entry name" value="DNAJ HOMOLOG SUBFAMILY C MEMBER 24"/>
    <property type="match status" value="1"/>
</dbReference>
<dbReference type="Pfam" id="PF00226">
    <property type="entry name" value="DnaJ"/>
    <property type="match status" value="1"/>
</dbReference>
<dbReference type="Pfam" id="PF05207">
    <property type="entry name" value="Zn_ribbon_CSL"/>
    <property type="match status" value="1"/>
</dbReference>
<dbReference type="PRINTS" id="PR00625">
    <property type="entry name" value="JDOMAIN"/>
</dbReference>
<dbReference type="SMART" id="SM00271">
    <property type="entry name" value="DnaJ"/>
    <property type="match status" value="1"/>
</dbReference>
<dbReference type="SUPFAM" id="SSF46565">
    <property type="entry name" value="Chaperone J-domain"/>
    <property type="match status" value="1"/>
</dbReference>
<dbReference type="SUPFAM" id="SSF144217">
    <property type="entry name" value="CSL zinc finger"/>
    <property type="match status" value="1"/>
</dbReference>
<dbReference type="PROSITE" id="PS50076">
    <property type="entry name" value="DNAJ_2"/>
    <property type="match status" value="1"/>
</dbReference>
<dbReference type="PROSITE" id="PS51074">
    <property type="entry name" value="DPH_MB"/>
    <property type="match status" value="1"/>
</dbReference>
<organism>
    <name type="scientific">Homo sapiens</name>
    <name type="common">Human</name>
    <dbReference type="NCBI Taxonomy" id="9606"/>
    <lineage>
        <taxon>Eukaryota</taxon>
        <taxon>Metazoa</taxon>
        <taxon>Chordata</taxon>
        <taxon>Craniata</taxon>
        <taxon>Vertebrata</taxon>
        <taxon>Euteleostomi</taxon>
        <taxon>Mammalia</taxon>
        <taxon>Eutheria</taxon>
        <taxon>Euarchontoglires</taxon>
        <taxon>Primates</taxon>
        <taxon>Haplorrhini</taxon>
        <taxon>Catarrhini</taxon>
        <taxon>Hominidae</taxon>
        <taxon>Homo</taxon>
    </lineage>
</organism>
<name>DJC24_HUMAN</name>
<sequence>MMAVEQMPKKDWYSILGADPSANISDLKQKYQKLILMYHPDKQSTDVPAGTVEECVQKFIEIDQAWKILGNEETKREYDLQRCEDDLRNVGPVDAQVYLEEMSWNEGDHSFYLSCRCGGKYSVSKDEAEEVSLISCDTCSLIIELLHYN</sequence>